<organism>
    <name type="scientific">Candida albicans (strain SC5314 / ATCC MYA-2876)</name>
    <name type="common">Yeast</name>
    <dbReference type="NCBI Taxonomy" id="237561"/>
    <lineage>
        <taxon>Eukaryota</taxon>
        <taxon>Fungi</taxon>
        <taxon>Dikarya</taxon>
        <taxon>Ascomycota</taxon>
        <taxon>Saccharomycotina</taxon>
        <taxon>Pichiomycetes</taxon>
        <taxon>Debaryomycetaceae</taxon>
        <taxon>Candida/Lodderomyces clade</taxon>
        <taxon>Candida</taxon>
    </lineage>
</organism>
<keyword id="KW-1003">Cell membrane</keyword>
<keyword id="KW-0961">Cell wall biogenesis/degradation</keyword>
<keyword id="KW-1015">Disulfide bond</keyword>
<keyword id="KW-0325">Glycoprotein</keyword>
<keyword id="KW-0336">GPI-anchor</keyword>
<keyword id="KW-0449">Lipoprotein</keyword>
<keyword id="KW-0472">Membrane</keyword>
<keyword id="KW-1185">Reference proteome</keyword>
<keyword id="KW-0732">Signal</keyword>
<keyword id="KW-0808">Transferase</keyword>
<sequence>MTTLSTIWLFLITITAIFQLGLSSNVTTIIDDDNNNNNNNNNNADDFLEPQIETIKVIGNKFFECESGHQFFIKGIAYQKTRQEGEIYDTTKEPHYIDPLANPFTCLRDLDYLKELGINLVRVYQIHPNANHDVCMNAFAEAGIYVLADLSEPTISIRRDYPHWDTEIFNRYQQVIDSMSNYKNLLGFFAGNEVTNCQSNIDASPFVRAAIRDCKKYINQQGYRKIPIGYASNDDANIRKNLANYFVCQLDEDEDKGQEHLNSQADFFAINVYEWCGYSTYTTSGYRDLTTMFKDYSVPVFFSEFGCNIITPRPFTEVEAIYGSTMKKVWSGGIAYEYFEEVNHYGILLTKKDGSITKLPDFDTLKMRFHAATPIGITMDEATICEPPICSNSVIDDKSSSSSSSSSFWDVALTLPPTPNEAKCECLWQSLSCVVSEDATFDEEVALRELCFKVDCEDINANGRSGKYGRYSDCNPTVRTSYALNKYYEQCGKKQEICDFQGRGELLPNRNGGLQDLENKFSSDGQNCLSLLEGKEEEKEVQEEEPDVPGLPGSNKGKEVESTPKRKGKGKSKEKEKGKLIEEEEEEEEEEEENNKTPSSGEKSPKTSKSIAGGNAITFKNDSIWKTFIEILFTCSAAILI</sequence>
<dbReference type="EC" id="2.4.1.-"/>
<dbReference type="EMBL" id="CP017623">
    <property type="protein sequence ID" value="AOW25920.1"/>
    <property type="molecule type" value="Genomic_DNA"/>
</dbReference>
<dbReference type="RefSeq" id="XP_713787.2">
    <property type="nucleotide sequence ID" value="XM_708694.2"/>
</dbReference>
<dbReference type="SMR" id="Q59VW6"/>
<dbReference type="FunCoup" id="Q59VW6">
    <property type="interactions" value="45"/>
</dbReference>
<dbReference type="STRING" id="237561.Q59VW6"/>
<dbReference type="GlyCosmos" id="Q59VW6">
    <property type="glycosylation" value="2 sites, No reported glycans"/>
</dbReference>
<dbReference type="EnsemblFungi" id="C1_02360C_A-T">
    <property type="protein sequence ID" value="C1_02360C_A-T-p1"/>
    <property type="gene ID" value="C1_02360C_A"/>
</dbReference>
<dbReference type="GeneID" id="3644575"/>
<dbReference type="KEGG" id="cal:CAALFM_C102360CA"/>
<dbReference type="CGD" id="CAL0000178583">
    <property type="gene designation" value="PGA5"/>
</dbReference>
<dbReference type="VEuPathDB" id="FungiDB:C1_02360C_A"/>
<dbReference type="eggNOG" id="ENOG502QRZZ">
    <property type="taxonomic scope" value="Eukaryota"/>
</dbReference>
<dbReference type="HOGENOM" id="CLU_021855_2_0_1"/>
<dbReference type="InParanoid" id="Q59VW6"/>
<dbReference type="OrthoDB" id="421038at2759"/>
<dbReference type="PRO" id="PR:Q59VW6"/>
<dbReference type="Proteomes" id="UP000000559">
    <property type="component" value="Chromosome 1"/>
</dbReference>
<dbReference type="GO" id="GO:0009277">
    <property type="term" value="C:fungal-type cell wall"/>
    <property type="evidence" value="ECO:0000318"/>
    <property type="project" value="GO_Central"/>
</dbReference>
<dbReference type="GO" id="GO:0005886">
    <property type="term" value="C:plasma membrane"/>
    <property type="evidence" value="ECO:0007669"/>
    <property type="project" value="UniProtKB-SubCell"/>
</dbReference>
<dbReference type="GO" id="GO:0098552">
    <property type="term" value="C:side of membrane"/>
    <property type="evidence" value="ECO:0007669"/>
    <property type="project" value="UniProtKB-KW"/>
</dbReference>
<dbReference type="GO" id="GO:0042124">
    <property type="term" value="F:1,3-beta-glucanosyltransferase activity"/>
    <property type="evidence" value="ECO:0000247"/>
    <property type="project" value="CGD"/>
</dbReference>
<dbReference type="GO" id="GO:0030476">
    <property type="term" value="P:ascospore wall assembly"/>
    <property type="evidence" value="ECO:0007669"/>
    <property type="project" value="EnsemblFungi"/>
</dbReference>
<dbReference type="GO" id="GO:0071970">
    <property type="term" value="P:fungal-type cell wall (1-&gt;3)-beta-D-glucan biosynthetic process"/>
    <property type="evidence" value="ECO:0000318"/>
    <property type="project" value="GO_Central"/>
</dbReference>
<dbReference type="GO" id="GO:0031505">
    <property type="term" value="P:fungal-type cell wall organization"/>
    <property type="evidence" value="ECO:0000318"/>
    <property type="project" value="GO_Central"/>
</dbReference>
<dbReference type="FunFam" id="3.20.20.80:FF:000038">
    <property type="entry name" value="1,3-beta-glucanosyltransferase"/>
    <property type="match status" value="1"/>
</dbReference>
<dbReference type="Gene3D" id="1.20.58.1040">
    <property type="match status" value="1"/>
</dbReference>
<dbReference type="Gene3D" id="3.20.20.80">
    <property type="entry name" value="Glycosidases"/>
    <property type="match status" value="1"/>
</dbReference>
<dbReference type="InterPro" id="IPR004886">
    <property type="entry name" value="Glucanosyltransferase"/>
</dbReference>
<dbReference type="InterPro" id="IPR017853">
    <property type="entry name" value="Glycoside_hydrolase_SF"/>
</dbReference>
<dbReference type="InterPro" id="IPR012946">
    <property type="entry name" value="X8"/>
</dbReference>
<dbReference type="PANTHER" id="PTHR31468">
    <property type="entry name" value="1,3-BETA-GLUCANOSYLTRANSFERASE GAS1"/>
    <property type="match status" value="1"/>
</dbReference>
<dbReference type="PANTHER" id="PTHR31468:SF10">
    <property type="entry name" value="1,3-BETA-GLUCANOSYLTRANSFERASE GAS2"/>
    <property type="match status" value="1"/>
</dbReference>
<dbReference type="Pfam" id="PF03198">
    <property type="entry name" value="Glyco_hydro_72"/>
    <property type="match status" value="1"/>
</dbReference>
<dbReference type="Pfam" id="PF07983">
    <property type="entry name" value="X8"/>
    <property type="match status" value="1"/>
</dbReference>
<dbReference type="SMART" id="SM00768">
    <property type="entry name" value="X8"/>
    <property type="match status" value="1"/>
</dbReference>
<dbReference type="SUPFAM" id="SSF51445">
    <property type="entry name" value="(Trans)glycosidases"/>
    <property type="match status" value="1"/>
</dbReference>
<proteinExistence type="evidence at protein level"/>
<evidence type="ECO:0000250" key="1"/>
<evidence type="ECO:0000250" key="2">
    <source>
        <dbReference type="UniProtKB" id="Q06135"/>
    </source>
</evidence>
<evidence type="ECO:0000255" key="3"/>
<evidence type="ECO:0000256" key="4">
    <source>
        <dbReference type="SAM" id="MobiDB-lite"/>
    </source>
</evidence>
<evidence type="ECO:0000269" key="5">
    <source>
    </source>
</evidence>
<evidence type="ECO:0000305" key="6"/>
<accession>Q59VW6</accession>
<accession>A0A1D8PCQ4</accession>
<reference key="1">
    <citation type="journal article" date="2004" name="Proc. Natl. Acad. Sci. U.S.A.">
        <title>The diploid genome sequence of Candida albicans.</title>
        <authorList>
            <person name="Jones T."/>
            <person name="Federspiel N.A."/>
            <person name="Chibana H."/>
            <person name="Dungan J."/>
            <person name="Kalman S."/>
            <person name="Magee B.B."/>
            <person name="Newport G."/>
            <person name="Thorstenson Y.R."/>
            <person name="Agabian N."/>
            <person name="Magee P.T."/>
            <person name="Davis R.W."/>
            <person name="Scherer S."/>
        </authorList>
    </citation>
    <scope>NUCLEOTIDE SEQUENCE [LARGE SCALE GENOMIC DNA]</scope>
    <source>
        <strain>SC5314 / ATCC MYA-2876</strain>
    </source>
</reference>
<reference key="2">
    <citation type="journal article" date="2007" name="Genome Biol.">
        <title>Assembly of the Candida albicans genome into sixteen supercontigs aligned on the eight chromosomes.</title>
        <authorList>
            <person name="van het Hoog M."/>
            <person name="Rast T.J."/>
            <person name="Martchenko M."/>
            <person name="Grindle S."/>
            <person name="Dignard D."/>
            <person name="Hogues H."/>
            <person name="Cuomo C."/>
            <person name="Berriman M."/>
            <person name="Scherer S."/>
            <person name="Magee B.B."/>
            <person name="Whiteway M."/>
            <person name="Chibana H."/>
            <person name="Nantel A."/>
            <person name="Magee P.T."/>
        </authorList>
    </citation>
    <scope>GENOME REANNOTATION</scope>
    <source>
        <strain>SC5314 / ATCC MYA-2876</strain>
    </source>
</reference>
<reference key="3">
    <citation type="journal article" date="2013" name="Genome Biol.">
        <title>Assembly of a phased diploid Candida albicans genome facilitates allele-specific measurements and provides a simple model for repeat and indel structure.</title>
        <authorList>
            <person name="Muzzey D."/>
            <person name="Schwartz K."/>
            <person name="Weissman J.S."/>
            <person name="Sherlock G."/>
        </authorList>
    </citation>
    <scope>NUCLEOTIDE SEQUENCE [LARGE SCALE GENOMIC DNA]</scope>
    <scope>GENOME REANNOTATION</scope>
    <source>
        <strain>SC5314 / ATCC MYA-2876</strain>
    </source>
</reference>
<reference key="4">
    <citation type="journal article" date="2003" name="Yeast">
        <title>Genome-wide identification of fungal GPI proteins.</title>
        <authorList>
            <person name="De Groot P.W."/>
            <person name="Hellingwerf K.J."/>
            <person name="Klis F.M."/>
        </authorList>
    </citation>
    <scope>PREDICTION OF GPI-ANCHOR</scope>
</reference>
<reference key="5">
    <citation type="journal article" date="2007" name="Fungal Genet. Biol.">
        <title>PGA4, a GAS homologue from Candida albicans, is up-regulated early in infection processes.</title>
        <authorList>
            <person name="Eckert S.E."/>
            <person name="Heinz W.J."/>
            <person name="Zakikhany K."/>
            <person name="Thewes S."/>
            <person name="Haynes K."/>
            <person name="Hube B."/>
            <person name="Muhlschlegel F.A."/>
        </authorList>
    </citation>
    <scope>INDUCTION</scope>
</reference>
<name>PGA5_CANAL</name>
<protein>
    <recommendedName>
        <fullName>1,3-beta-glucanosyltransferase PGA5</fullName>
        <ecNumber>2.4.1.-</ecNumber>
    </recommendedName>
    <alternativeName>
        <fullName>Predicted GPI-anchored protein 5</fullName>
    </alternativeName>
</protein>
<gene>
    <name type="primary">PGA5</name>
    <name type="synonym">GAS12</name>
    <name type="ordered locus">CAALFM_C102360CA</name>
    <name type="ORF">CaO19.11177</name>
    <name type="ORF">CaO19.3693</name>
</gene>
<comment type="function">
    <text evidence="1">Splits internally a 1,3-beta-glucan molecule and transfers the newly generated reducing end (the donor) to the non-reducing end of another 1,3-beta-glucan molecule (the acceptor) forming a 1,3-beta linkage, resulting in the elongation of 1,3-beta-glucan chains in the cell wall. Involved in spore wall assembly (By similarity).</text>
</comment>
<comment type="subcellular location">
    <subcellularLocation>
        <location evidence="1">Cell membrane</location>
        <topology evidence="1">Lipid-anchor</topology>
        <topology evidence="1">GPI-anchor</topology>
    </subcellularLocation>
</comment>
<comment type="induction">
    <text evidence="5">Expression is very weak and pH-independent.</text>
</comment>
<comment type="similarity">
    <text evidence="6">Belongs to the glycosyl hydrolase 72 family.</text>
</comment>
<feature type="signal peptide" evidence="3">
    <location>
        <begin position="1"/>
        <end position="23"/>
    </location>
</feature>
<feature type="chain" id="PRO_0000424642" description="1,3-beta-glucanosyltransferase PGA5">
    <location>
        <begin position="24"/>
        <end position="622"/>
    </location>
</feature>
<feature type="propeptide" id="PRO_0000424643" description="Removed in mature form" evidence="3">
    <location>
        <begin position="623"/>
        <end position="641"/>
    </location>
</feature>
<feature type="region of interest" description="Disordered" evidence="4">
    <location>
        <begin position="535"/>
        <end position="613"/>
    </location>
</feature>
<feature type="compositionally biased region" description="Basic and acidic residues" evidence="4">
    <location>
        <begin position="571"/>
        <end position="581"/>
    </location>
</feature>
<feature type="compositionally biased region" description="Acidic residues" evidence="4">
    <location>
        <begin position="582"/>
        <end position="593"/>
    </location>
</feature>
<feature type="compositionally biased region" description="Polar residues" evidence="4">
    <location>
        <begin position="596"/>
        <end position="610"/>
    </location>
</feature>
<feature type="active site" description="Proton donor" evidence="1">
    <location>
        <position position="193"/>
    </location>
</feature>
<feature type="active site" description="Nucleophile" evidence="1">
    <location>
        <position position="304"/>
    </location>
</feature>
<feature type="binding site" evidence="2">
    <location>
        <position position="124"/>
    </location>
    <ligand>
        <name>(1,3-beta-D-glucosyl)n</name>
        <dbReference type="ChEBI" id="CHEBI:37671"/>
        <label>1</label>
        <note>donor substrate</note>
    </ligand>
</feature>
<feature type="binding site" evidence="2">
    <location>
        <position position="192"/>
    </location>
    <ligand>
        <name>(1,3-beta-D-glucosyl)n</name>
        <dbReference type="ChEBI" id="CHEBI:37671"/>
        <label>1</label>
        <note>donor substrate</note>
    </ligand>
</feature>
<feature type="binding site" evidence="2">
    <location>
        <position position="193"/>
    </location>
    <ligand>
        <name>(1,3-beta-D-glucosyl)n</name>
        <dbReference type="ChEBI" id="CHEBI:37671"/>
        <label>2</label>
        <note>acceptor substrate</note>
    </ligand>
</feature>
<feature type="binding site" evidence="2">
    <location>
        <position position="234"/>
    </location>
    <ligand>
        <name>(1,3-beta-D-glucosyl)n</name>
        <dbReference type="ChEBI" id="CHEBI:37671"/>
        <label>2</label>
        <note>acceptor substrate</note>
    </ligand>
</feature>
<feature type="binding site" evidence="2">
    <location>
        <position position="239"/>
    </location>
    <ligand>
        <name>(1,3-beta-D-glucosyl)n</name>
        <dbReference type="ChEBI" id="CHEBI:37671"/>
        <label>2</label>
        <note>acceptor substrate</note>
    </ligand>
</feature>
<feature type="binding site" evidence="2">
    <location>
        <position position="336"/>
    </location>
    <ligand>
        <name>(1,3-beta-D-glucosyl)n</name>
        <dbReference type="ChEBI" id="CHEBI:37671"/>
        <label>1</label>
        <note>donor substrate</note>
    </ligand>
</feature>
<feature type="lipid moiety-binding region" description="GPI-anchor amidated aspartate" evidence="3">
    <location>
        <position position="622"/>
    </location>
</feature>
<feature type="glycosylation site" description="N-linked (GlcNAc...) asparagine" evidence="3">
    <location>
        <position position="25"/>
    </location>
</feature>
<feature type="glycosylation site" description="N-linked (GlcNAc...) asparagine" evidence="3">
    <location>
        <position position="621"/>
    </location>
</feature>
<feature type="disulfide bond" evidence="2">
    <location>
        <begin position="106"/>
        <end position="135"/>
    </location>
</feature>
<feature type="disulfide bond" evidence="2">
    <location>
        <begin position="248"/>
        <end position="390"/>
    </location>
</feature>
<feature type="disulfide bond" evidence="2">
    <location>
        <begin position="276"/>
        <end position="307"/>
    </location>
</feature>
<feature type="disulfide bond" evidence="2">
    <location>
        <begin position="424"/>
        <end position="474"/>
    </location>
</feature>
<feature type="disulfide bond" evidence="1">
    <location>
        <begin position="426"/>
        <end position="528"/>
    </location>
</feature>
<feature type="disulfide bond" evidence="2">
    <location>
        <begin position="433"/>
        <end position="498"/>
    </location>
</feature>
<feature type="disulfide bond" evidence="2">
    <location>
        <begin position="451"/>
        <end position="456"/>
    </location>
</feature>